<proteinExistence type="inferred from homology"/>
<dbReference type="EC" id="6.3.5.-" evidence="1"/>
<dbReference type="EMBL" id="AL161712">
    <property type="protein sequence ID" value="CAC35907.1"/>
    <property type="molecule type" value="Genomic_DNA"/>
</dbReference>
<dbReference type="RefSeq" id="NP_499495.1">
    <property type="nucleotide sequence ID" value="NM_067094.7"/>
</dbReference>
<dbReference type="SMR" id="Q9BI40"/>
<dbReference type="FunCoup" id="Q9BI40">
    <property type="interactions" value="1974"/>
</dbReference>
<dbReference type="STRING" id="6239.Y66D12A.7.1"/>
<dbReference type="PaxDb" id="6239-Y66D12A.7"/>
<dbReference type="PeptideAtlas" id="Q9BI40"/>
<dbReference type="EnsemblMetazoa" id="Y66D12A.7.1">
    <property type="protein sequence ID" value="Y66D12A.7.1"/>
    <property type="gene ID" value="WBGene00013433"/>
</dbReference>
<dbReference type="GeneID" id="176590"/>
<dbReference type="KEGG" id="cel:CELE_Y66D12A.7"/>
<dbReference type="UCSC" id="Y66D12A.7">
    <property type="organism name" value="c. elegans"/>
</dbReference>
<dbReference type="AGR" id="WB:WBGene00013433"/>
<dbReference type="CTD" id="176590"/>
<dbReference type="WormBase" id="Y66D12A.7">
    <property type="protein sequence ID" value="CE26457"/>
    <property type="gene ID" value="WBGene00013433"/>
</dbReference>
<dbReference type="eggNOG" id="KOG4247">
    <property type="taxonomic scope" value="Eukaryota"/>
</dbReference>
<dbReference type="GeneTree" id="ENSGT00390000018351"/>
<dbReference type="HOGENOM" id="CLU_105899_0_0_1"/>
<dbReference type="InParanoid" id="Q9BI40"/>
<dbReference type="OMA" id="VTEGECA"/>
<dbReference type="OrthoDB" id="5394539at2759"/>
<dbReference type="PhylomeDB" id="Q9BI40"/>
<dbReference type="PRO" id="PR:Q9BI40"/>
<dbReference type="Proteomes" id="UP000001940">
    <property type="component" value="Chromosome III"/>
</dbReference>
<dbReference type="Bgee" id="WBGene00013433">
    <property type="expression patterns" value="Expressed in germ line (C elegans) and 4 other cell types or tissues"/>
</dbReference>
<dbReference type="GO" id="GO:0030956">
    <property type="term" value="C:glutamyl-tRNA(Gln) amidotransferase complex"/>
    <property type="evidence" value="ECO:0000318"/>
    <property type="project" value="GO_Central"/>
</dbReference>
<dbReference type="GO" id="GO:0005739">
    <property type="term" value="C:mitochondrion"/>
    <property type="evidence" value="ECO:0000318"/>
    <property type="project" value="GO_Central"/>
</dbReference>
<dbReference type="GO" id="GO:0005524">
    <property type="term" value="F:ATP binding"/>
    <property type="evidence" value="ECO:0007669"/>
    <property type="project" value="UniProtKB-KW"/>
</dbReference>
<dbReference type="GO" id="GO:0050567">
    <property type="term" value="F:glutaminyl-tRNA synthase (glutamine-hydrolyzing) activity"/>
    <property type="evidence" value="ECO:0007669"/>
    <property type="project" value="UniProtKB-UniRule"/>
</dbReference>
<dbReference type="GO" id="GO:0070681">
    <property type="term" value="P:glutaminyl-tRNAGln biosynthesis via transamidation"/>
    <property type="evidence" value="ECO:0000318"/>
    <property type="project" value="GO_Central"/>
</dbReference>
<dbReference type="GO" id="GO:0032543">
    <property type="term" value="P:mitochondrial translation"/>
    <property type="evidence" value="ECO:0000318"/>
    <property type="project" value="GO_Central"/>
</dbReference>
<dbReference type="GO" id="GO:0006450">
    <property type="term" value="P:regulation of translational fidelity"/>
    <property type="evidence" value="ECO:0007669"/>
    <property type="project" value="InterPro"/>
</dbReference>
<dbReference type="HAMAP" id="MF_00122">
    <property type="entry name" value="GatC"/>
    <property type="match status" value="1"/>
</dbReference>
<dbReference type="InterPro" id="IPR036113">
    <property type="entry name" value="Asp/Glu-ADT_sf_sub_c"/>
</dbReference>
<dbReference type="InterPro" id="IPR003837">
    <property type="entry name" value="GatC"/>
</dbReference>
<dbReference type="PANTHER" id="PTHR15004">
    <property type="entry name" value="GLUTAMYL-TRNA(GLN) AMIDOTRANSFERASE SUBUNIT C, MITOCHONDRIAL"/>
    <property type="match status" value="1"/>
</dbReference>
<dbReference type="PANTHER" id="PTHR15004:SF0">
    <property type="entry name" value="GLUTAMYL-TRNA(GLN) AMIDOTRANSFERASE SUBUNIT C, MITOCHONDRIAL"/>
    <property type="match status" value="1"/>
</dbReference>
<dbReference type="Pfam" id="PF02686">
    <property type="entry name" value="GatC"/>
    <property type="match status" value="1"/>
</dbReference>
<dbReference type="SUPFAM" id="SSF141000">
    <property type="entry name" value="Glu-tRNAGln amidotransferase C subunit"/>
    <property type="match status" value="1"/>
</dbReference>
<name>GATC_CAEEL</name>
<feature type="chain" id="PRO_0000413314" description="Glutamyl-tRNA(Gln) amidotransferase subunit C, mitochondrial">
    <location>
        <begin position="1"/>
        <end position="175"/>
    </location>
</feature>
<reference key="1">
    <citation type="journal article" date="1998" name="Science">
        <title>Genome sequence of the nematode C. elegans: a platform for investigating biology.</title>
        <authorList>
            <consortium name="The C. elegans sequencing consortium"/>
        </authorList>
    </citation>
    <scope>NUCLEOTIDE SEQUENCE [LARGE SCALE GENOMIC DNA]</scope>
    <source>
        <strain>Bristol N2</strain>
    </source>
</reference>
<accession>Q9BI40</accession>
<gene>
    <name type="ORF">Y66D12A.7</name>
</gene>
<evidence type="ECO:0000255" key="1">
    <source>
        <dbReference type="HAMAP-Rule" id="MF_03149"/>
    </source>
</evidence>
<organism>
    <name type="scientific">Caenorhabditis elegans</name>
    <dbReference type="NCBI Taxonomy" id="6239"/>
    <lineage>
        <taxon>Eukaryota</taxon>
        <taxon>Metazoa</taxon>
        <taxon>Ecdysozoa</taxon>
        <taxon>Nematoda</taxon>
        <taxon>Chromadorea</taxon>
        <taxon>Rhabditida</taxon>
        <taxon>Rhabditina</taxon>
        <taxon>Rhabditomorpha</taxon>
        <taxon>Rhabditoidea</taxon>
        <taxon>Rhabditidae</taxon>
        <taxon>Peloderinae</taxon>
        <taxon>Caenorhabditis</taxon>
    </lineage>
</organism>
<protein>
    <recommendedName>
        <fullName evidence="1">Glutamyl-tRNA(Gln) amidotransferase subunit C, mitochondrial</fullName>
        <shortName evidence="1">Glu-AdT subunit C</shortName>
        <ecNumber evidence="1">6.3.5.-</ecNumber>
    </recommendedName>
</protein>
<keyword id="KW-0067">ATP-binding</keyword>
<keyword id="KW-0436">Ligase</keyword>
<keyword id="KW-0496">Mitochondrion</keyword>
<keyword id="KW-0547">Nucleotide-binding</keyword>
<keyword id="KW-0648">Protein biosynthesis</keyword>
<keyword id="KW-1185">Reference proteome</keyword>
<comment type="function">
    <text evidence="1">Allows the formation of correctly charged Gln-tRNA(Gln) through the transamidation of misacylated Glu-tRNA(Gln) in the mitochondria. The reaction takes place in the presence of glutamine and ATP through an activated gamma-phospho-Glu-tRNA(Gln).</text>
</comment>
<comment type="catalytic activity">
    <reaction evidence="1">
        <text>L-glutamyl-tRNA(Gln) + L-glutamine + ATP + H2O = L-glutaminyl-tRNA(Gln) + L-glutamate + ADP + phosphate + H(+)</text>
        <dbReference type="Rhea" id="RHEA:17521"/>
        <dbReference type="Rhea" id="RHEA-COMP:9681"/>
        <dbReference type="Rhea" id="RHEA-COMP:9684"/>
        <dbReference type="ChEBI" id="CHEBI:15377"/>
        <dbReference type="ChEBI" id="CHEBI:15378"/>
        <dbReference type="ChEBI" id="CHEBI:29985"/>
        <dbReference type="ChEBI" id="CHEBI:30616"/>
        <dbReference type="ChEBI" id="CHEBI:43474"/>
        <dbReference type="ChEBI" id="CHEBI:58359"/>
        <dbReference type="ChEBI" id="CHEBI:78520"/>
        <dbReference type="ChEBI" id="CHEBI:78521"/>
        <dbReference type="ChEBI" id="CHEBI:456216"/>
    </reaction>
</comment>
<comment type="subunit">
    <text evidence="1">Subunit of the heterotrimeric GatCAB amidotransferase (AdT) complex, composed of A, B and C subunits.</text>
</comment>
<comment type="subcellular location">
    <subcellularLocation>
        <location evidence="1">Mitochondrion</location>
    </subcellularLocation>
</comment>
<comment type="miscellaneous">
    <text evidence="1">This protein may be expected to contain an N-terminal transit peptide but none has been predicted.</text>
</comment>
<comment type="similarity">
    <text evidence="1">Belongs to the GatC family.</text>
</comment>
<sequence>MNLIFTRIIRRFGEGKRKTPFPGDPILVPDEPYDSKIQESQLSPMPQIDAKLINHLERLSLVRFDSEQAVANLRSSIRVAKRLELVDVEGVEPMHTVWEDQECPTFEDVEEDPLPIEEVFRNASLRFDDFFVTPPGNLPLESKERFDLNVINEWDTIGKPVAPEVKLTRMTERKK</sequence>